<organism>
    <name type="scientific">Schizosaccharomyces pombe (strain 972 / ATCC 24843)</name>
    <name type="common">Fission yeast</name>
    <dbReference type="NCBI Taxonomy" id="284812"/>
    <lineage>
        <taxon>Eukaryota</taxon>
        <taxon>Fungi</taxon>
        <taxon>Dikarya</taxon>
        <taxon>Ascomycota</taxon>
        <taxon>Taphrinomycotina</taxon>
        <taxon>Schizosaccharomycetes</taxon>
        <taxon>Schizosaccharomycetales</taxon>
        <taxon>Schizosaccharomycetaceae</taxon>
        <taxon>Schizosaccharomyces</taxon>
    </lineage>
</organism>
<reference key="1">
    <citation type="journal article" date="2002" name="Nature">
        <title>The genome sequence of Schizosaccharomyces pombe.</title>
        <authorList>
            <person name="Wood V."/>
            <person name="Gwilliam R."/>
            <person name="Rajandream M.A."/>
            <person name="Lyne M.H."/>
            <person name="Lyne R."/>
            <person name="Stewart A."/>
            <person name="Sgouros J.G."/>
            <person name="Peat N."/>
            <person name="Hayles J."/>
            <person name="Baker S.G."/>
            <person name="Basham D."/>
            <person name="Bowman S."/>
            <person name="Brooks K."/>
            <person name="Brown D."/>
            <person name="Brown S."/>
            <person name="Chillingworth T."/>
            <person name="Churcher C.M."/>
            <person name="Collins M."/>
            <person name="Connor R."/>
            <person name="Cronin A."/>
            <person name="Davis P."/>
            <person name="Feltwell T."/>
            <person name="Fraser A."/>
            <person name="Gentles S."/>
            <person name="Goble A."/>
            <person name="Hamlin N."/>
            <person name="Harris D.E."/>
            <person name="Hidalgo J."/>
            <person name="Hodgson G."/>
            <person name="Holroyd S."/>
            <person name="Hornsby T."/>
            <person name="Howarth S."/>
            <person name="Huckle E.J."/>
            <person name="Hunt S."/>
            <person name="Jagels K."/>
            <person name="James K.D."/>
            <person name="Jones L."/>
            <person name="Jones M."/>
            <person name="Leather S."/>
            <person name="McDonald S."/>
            <person name="McLean J."/>
            <person name="Mooney P."/>
            <person name="Moule S."/>
            <person name="Mungall K.L."/>
            <person name="Murphy L.D."/>
            <person name="Niblett D."/>
            <person name="Odell C."/>
            <person name="Oliver K."/>
            <person name="O'Neil S."/>
            <person name="Pearson D."/>
            <person name="Quail M.A."/>
            <person name="Rabbinowitsch E."/>
            <person name="Rutherford K.M."/>
            <person name="Rutter S."/>
            <person name="Saunders D."/>
            <person name="Seeger K."/>
            <person name="Sharp S."/>
            <person name="Skelton J."/>
            <person name="Simmonds M.N."/>
            <person name="Squares R."/>
            <person name="Squares S."/>
            <person name="Stevens K."/>
            <person name="Taylor K."/>
            <person name="Taylor R.G."/>
            <person name="Tivey A."/>
            <person name="Walsh S.V."/>
            <person name="Warren T."/>
            <person name="Whitehead S."/>
            <person name="Woodward J.R."/>
            <person name="Volckaert G."/>
            <person name="Aert R."/>
            <person name="Robben J."/>
            <person name="Grymonprez B."/>
            <person name="Weltjens I."/>
            <person name="Vanstreels E."/>
            <person name="Rieger M."/>
            <person name="Schaefer M."/>
            <person name="Mueller-Auer S."/>
            <person name="Gabel C."/>
            <person name="Fuchs M."/>
            <person name="Duesterhoeft A."/>
            <person name="Fritzc C."/>
            <person name="Holzer E."/>
            <person name="Moestl D."/>
            <person name="Hilbert H."/>
            <person name="Borzym K."/>
            <person name="Langer I."/>
            <person name="Beck A."/>
            <person name="Lehrach H."/>
            <person name="Reinhardt R."/>
            <person name="Pohl T.M."/>
            <person name="Eger P."/>
            <person name="Zimmermann W."/>
            <person name="Wedler H."/>
            <person name="Wambutt R."/>
            <person name="Purnelle B."/>
            <person name="Goffeau A."/>
            <person name="Cadieu E."/>
            <person name="Dreano S."/>
            <person name="Gloux S."/>
            <person name="Lelaure V."/>
            <person name="Mottier S."/>
            <person name="Galibert F."/>
            <person name="Aves S.J."/>
            <person name="Xiang Z."/>
            <person name="Hunt C."/>
            <person name="Moore K."/>
            <person name="Hurst S.M."/>
            <person name="Lucas M."/>
            <person name="Rochet M."/>
            <person name="Gaillardin C."/>
            <person name="Tallada V.A."/>
            <person name="Garzon A."/>
            <person name="Thode G."/>
            <person name="Daga R.R."/>
            <person name="Cruzado L."/>
            <person name="Jimenez J."/>
            <person name="Sanchez M."/>
            <person name="del Rey F."/>
            <person name="Benito J."/>
            <person name="Dominguez A."/>
            <person name="Revuelta J.L."/>
            <person name="Moreno S."/>
            <person name="Armstrong J."/>
            <person name="Forsburg S.L."/>
            <person name="Cerutti L."/>
            <person name="Lowe T."/>
            <person name="McCombie W.R."/>
            <person name="Paulsen I."/>
            <person name="Potashkin J."/>
            <person name="Shpakovski G.V."/>
            <person name="Ussery D."/>
            <person name="Barrell B.G."/>
            <person name="Nurse P."/>
        </authorList>
    </citation>
    <scope>NUCLEOTIDE SEQUENCE [LARGE SCALE GENOMIC DNA]</scope>
    <source>
        <strain>972 / ATCC 24843</strain>
    </source>
</reference>
<keyword id="KW-1015">Disulfide bond</keyword>
<keyword id="KW-0496">Mitochondrion</keyword>
<keyword id="KW-1185">Reference proteome</keyword>
<name>PT191_SCHPO</name>
<sequence>MGRSCKVIREDLANCLLHSDCMFVKKKSARECLKNKDELPEECKNLIEAYGECKRQMLDMTKRYRIAPEKNTDQDTEKPSNVDEQ</sequence>
<feature type="chain" id="PRO_0000325874" description="Mitochondrial protein pet191 homolog">
    <location>
        <begin position="1"/>
        <end position="85"/>
    </location>
</feature>
<feature type="domain" description="CHCH" evidence="2">
    <location>
        <begin position="18"/>
        <end position="61"/>
    </location>
</feature>
<feature type="region of interest" description="Disordered" evidence="3">
    <location>
        <begin position="65"/>
        <end position="85"/>
    </location>
</feature>
<feature type="short sequence motif" description="Cx10C motif" evidence="2">
    <location>
        <begin position="21"/>
        <end position="32"/>
    </location>
</feature>
<feature type="short sequence motif" description="Cx9C motif" evidence="2">
    <location>
        <begin position="43"/>
        <end position="53"/>
    </location>
</feature>
<feature type="disulfide bond" evidence="2">
    <location>
        <begin position="21"/>
        <end position="53"/>
    </location>
</feature>
<feature type="disulfide bond" evidence="2">
    <location>
        <begin position="32"/>
        <end position="43"/>
    </location>
</feature>
<evidence type="ECO:0000250" key="1"/>
<evidence type="ECO:0000255" key="2">
    <source>
        <dbReference type="PROSITE-ProRule" id="PRU01150"/>
    </source>
</evidence>
<evidence type="ECO:0000256" key="3">
    <source>
        <dbReference type="SAM" id="MobiDB-lite"/>
    </source>
</evidence>
<evidence type="ECO:0000305" key="4"/>
<dbReference type="EMBL" id="CU329671">
    <property type="protein sequence ID" value="CAA16867.1"/>
    <property type="molecule type" value="Genomic_DNA"/>
</dbReference>
<dbReference type="PIR" id="T39536">
    <property type="entry name" value="T39536"/>
</dbReference>
<dbReference type="RefSeq" id="NP_596773.1">
    <property type="nucleotide sequence ID" value="NM_001023794.2"/>
</dbReference>
<dbReference type="SMR" id="O42921"/>
<dbReference type="BioGRID" id="276239">
    <property type="interactions" value="12"/>
</dbReference>
<dbReference type="FunCoup" id="O42921">
    <property type="interactions" value="204"/>
</dbReference>
<dbReference type="STRING" id="284812.O42921"/>
<dbReference type="PaxDb" id="4896-SPBC16A3.16.1"/>
<dbReference type="EnsemblFungi" id="SPBC16A3.16.1">
    <property type="protein sequence ID" value="SPBC16A3.16.1:pep"/>
    <property type="gene ID" value="SPBC16A3.16"/>
</dbReference>
<dbReference type="PomBase" id="SPBC16A3.16"/>
<dbReference type="VEuPathDB" id="FungiDB:SPBC16A3.16"/>
<dbReference type="eggNOG" id="KOG4114">
    <property type="taxonomic scope" value="Eukaryota"/>
</dbReference>
<dbReference type="HOGENOM" id="CLU_138069_3_1_1"/>
<dbReference type="InParanoid" id="O42921"/>
<dbReference type="OMA" id="KKTPKEC"/>
<dbReference type="PhylomeDB" id="O42921"/>
<dbReference type="PRO" id="PR:O42921"/>
<dbReference type="Proteomes" id="UP000002485">
    <property type="component" value="Chromosome II"/>
</dbReference>
<dbReference type="GO" id="GO:0005758">
    <property type="term" value="C:mitochondrial intermembrane space"/>
    <property type="evidence" value="ECO:0000266"/>
    <property type="project" value="PomBase"/>
</dbReference>
<dbReference type="GO" id="GO:0005739">
    <property type="term" value="C:mitochondrion"/>
    <property type="evidence" value="ECO:0000318"/>
    <property type="project" value="GO_Central"/>
</dbReference>
<dbReference type="GO" id="GO:0033617">
    <property type="term" value="P:mitochondrial cytochrome c oxidase assembly"/>
    <property type="evidence" value="ECO:0000318"/>
    <property type="project" value="GO_Central"/>
</dbReference>
<dbReference type="InterPro" id="IPR018793">
    <property type="entry name" value="Cyt_c_oxidase_assmbl_Pet191"/>
</dbReference>
<dbReference type="PANTHER" id="PTHR28627">
    <property type="entry name" value="CYTOCHROME C OXIDASE ASSEMBLY FACTOR 5"/>
    <property type="match status" value="1"/>
</dbReference>
<dbReference type="PANTHER" id="PTHR28627:SF1">
    <property type="entry name" value="CYTOCHROME C OXIDASE ASSEMBLY FACTOR 5"/>
    <property type="match status" value="1"/>
</dbReference>
<dbReference type="Pfam" id="PF10203">
    <property type="entry name" value="Pet191_N"/>
    <property type="match status" value="1"/>
</dbReference>
<dbReference type="PROSITE" id="PS51808">
    <property type="entry name" value="CHCH"/>
    <property type="match status" value="1"/>
</dbReference>
<accession>O42921</accession>
<proteinExistence type="inferred from homology"/>
<gene>
    <name type="ORF">SPBC16A3.16</name>
</gene>
<comment type="function">
    <text evidence="1">Involved in the assembly of cytochrome c oxidase.</text>
</comment>
<comment type="subcellular location">
    <subcellularLocation>
        <location evidence="1">Mitochondrion</location>
    </subcellularLocation>
</comment>
<comment type="similarity">
    <text evidence="4">Belongs to the PET191 family.</text>
</comment>
<protein>
    <recommendedName>
        <fullName>Mitochondrial protein pet191 homolog</fullName>
    </recommendedName>
</protein>